<evidence type="ECO:0000255" key="1">
    <source>
        <dbReference type="HAMAP-Rule" id="MF_01710"/>
    </source>
</evidence>
<organism>
    <name type="scientific">Staphylococcus aureus (strain MW2)</name>
    <dbReference type="NCBI Taxonomy" id="196620"/>
    <lineage>
        <taxon>Bacteria</taxon>
        <taxon>Bacillati</taxon>
        <taxon>Bacillota</taxon>
        <taxon>Bacilli</taxon>
        <taxon>Bacillales</taxon>
        <taxon>Staphylococcaceae</taxon>
        <taxon>Staphylococcus</taxon>
    </lineage>
</organism>
<proteinExistence type="inferred from homology"/>
<feature type="chain" id="PRO_0000092077" description="Energy-coupling factor transporter ATP-binding protein EcfA2">
    <location>
        <begin position="1"/>
        <end position="286"/>
    </location>
</feature>
<feature type="domain" description="ABC transporter" evidence="1">
    <location>
        <begin position="3"/>
        <end position="246"/>
    </location>
</feature>
<feature type="binding site" evidence="1">
    <location>
        <begin position="40"/>
        <end position="47"/>
    </location>
    <ligand>
        <name>ATP</name>
        <dbReference type="ChEBI" id="CHEBI:30616"/>
    </ligand>
</feature>
<sequence>MTIRFDNVSYTYQKGTPYQHQAIHDVNTEFEQGKYYAIVGQTGSGKSTLIQNINALLKPTTGTVTVDDITITHKTKDKYIRPVRKRIGMVFQFPESQLFEDTVEREMIFGPKNFKMNLDEAKNYAHRLLMDLGFSRDVMSQSPFQMSGGQMRKIAIVSILAMNPDIIVVDEPTAGLDPQSKRQVMRLLKSLQTDENKAIILISHDMNEVARYADEVIVMKEGSIVSQTSPKELFKDKKKLADWHIGLPEIVQLQYDFEQKYQTKLKDIALTEEAFVSLYKEWQHEK</sequence>
<comment type="function">
    <text evidence="1">ATP-binding (A) component of a common energy-coupling factor (ECF) ABC-transporter complex. Unlike classic ABC transporters this ECF transporter provides the energy necessary to transport a number of different substrates.</text>
</comment>
<comment type="subunit">
    <text evidence="1">Forms a stable energy-coupling factor (ECF) transporter complex composed of 2 membrane-embedded substrate-binding proteins (S component), 2 ATP-binding proteins (A component) and 2 transmembrane proteins (T component).</text>
</comment>
<comment type="subcellular location">
    <subcellularLocation>
        <location evidence="1">Cell membrane</location>
        <topology evidence="1">Peripheral membrane protein</topology>
    </subcellularLocation>
</comment>
<comment type="similarity">
    <text evidence="1">Belongs to the ABC transporter superfamily. Energy-coupling factor EcfA family.</text>
</comment>
<keyword id="KW-0067">ATP-binding</keyword>
<keyword id="KW-1003">Cell membrane</keyword>
<keyword id="KW-0472">Membrane</keyword>
<keyword id="KW-0547">Nucleotide-binding</keyword>
<keyword id="KW-1278">Translocase</keyword>
<keyword id="KW-0813">Transport</keyword>
<name>ECFA2_STAAW</name>
<dbReference type="EC" id="7.-.-.-" evidence="1"/>
<dbReference type="EMBL" id="BA000033">
    <property type="protein sequence ID" value="BAB96005.1"/>
    <property type="molecule type" value="Genomic_DNA"/>
</dbReference>
<dbReference type="RefSeq" id="WP_000155386.1">
    <property type="nucleotide sequence ID" value="NC_003923.1"/>
</dbReference>
<dbReference type="SMR" id="Q7A088"/>
<dbReference type="KEGG" id="sam:MW2140"/>
<dbReference type="HOGENOM" id="CLU_000604_1_22_9"/>
<dbReference type="GO" id="GO:0043190">
    <property type="term" value="C:ATP-binding cassette (ABC) transporter complex"/>
    <property type="evidence" value="ECO:0007669"/>
    <property type="project" value="TreeGrafter"/>
</dbReference>
<dbReference type="GO" id="GO:0005524">
    <property type="term" value="F:ATP binding"/>
    <property type="evidence" value="ECO:0007669"/>
    <property type="project" value="UniProtKB-KW"/>
</dbReference>
<dbReference type="GO" id="GO:0016887">
    <property type="term" value="F:ATP hydrolysis activity"/>
    <property type="evidence" value="ECO:0007669"/>
    <property type="project" value="InterPro"/>
</dbReference>
<dbReference type="GO" id="GO:0042626">
    <property type="term" value="F:ATPase-coupled transmembrane transporter activity"/>
    <property type="evidence" value="ECO:0007669"/>
    <property type="project" value="TreeGrafter"/>
</dbReference>
<dbReference type="CDD" id="cd03225">
    <property type="entry name" value="ABC_cobalt_CbiO_domain1"/>
    <property type="match status" value="1"/>
</dbReference>
<dbReference type="FunFam" id="3.40.50.300:FF:000224">
    <property type="entry name" value="Energy-coupling factor transporter ATP-binding protein EcfA"/>
    <property type="match status" value="1"/>
</dbReference>
<dbReference type="Gene3D" id="3.40.50.300">
    <property type="entry name" value="P-loop containing nucleotide triphosphate hydrolases"/>
    <property type="match status" value="1"/>
</dbReference>
<dbReference type="InterPro" id="IPR003593">
    <property type="entry name" value="AAA+_ATPase"/>
</dbReference>
<dbReference type="InterPro" id="IPR003439">
    <property type="entry name" value="ABC_transporter-like_ATP-bd"/>
</dbReference>
<dbReference type="InterPro" id="IPR017871">
    <property type="entry name" value="ABC_transporter-like_CS"/>
</dbReference>
<dbReference type="InterPro" id="IPR015856">
    <property type="entry name" value="ABC_transpr_CbiO/EcfA_su"/>
</dbReference>
<dbReference type="InterPro" id="IPR050095">
    <property type="entry name" value="ECF_ABC_transporter_ATP-bd"/>
</dbReference>
<dbReference type="InterPro" id="IPR030946">
    <property type="entry name" value="EcfA2"/>
</dbReference>
<dbReference type="InterPro" id="IPR027417">
    <property type="entry name" value="P-loop_NTPase"/>
</dbReference>
<dbReference type="NCBIfam" id="TIGR04521">
    <property type="entry name" value="ECF_ATPase_2"/>
    <property type="match status" value="1"/>
</dbReference>
<dbReference type="NCBIfam" id="NF010166">
    <property type="entry name" value="PRK13646.1"/>
    <property type="match status" value="1"/>
</dbReference>
<dbReference type="PANTHER" id="PTHR43553:SF27">
    <property type="entry name" value="ENERGY-COUPLING FACTOR TRANSPORTER ATP-BINDING PROTEIN ECFA2"/>
    <property type="match status" value="1"/>
</dbReference>
<dbReference type="PANTHER" id="PTHR43553">
    <property type="entry name" value="HEAVY METAL TRANSPORTER"/>
    <property type="match status" value="1"/>
</dbReference>
<dbReference type="Pfam" id="PF00005">
    <property type="entry name" value="ABC_tran"/>
    <property type="match status" value="1"/>
</dbReference>
<dbReference type="SMART" id="SM00382">
    <property type="entry name" value="AAA"/>
    <property type="match status" value="1"/>
</dbReference>
<dbReference type="SUPFAM" id="SSF52540">
    <property type="entry name" value="P-loop containing nucleoside triphosphate hydrolases"/>
    <property type="match status" value="1"/>
</dbReference>
<dbReference type="PROSITE" id="PS00211">
    <property type="entry name" value="ABC_TRANSPORTER_1"/>
    <property type="match status" value="1"/>
</dbReference>
<dbReference type="PROSITE" id="PS50893">
    <property type="entry name" value="ABC_TRANSPORTER_2"/>
    <property type="match status" value="1"/>
</dbReference>
<dbReference type="PROSITE" id="PS51246">
    <property type="entry name" value="CBIO"/>
    <property type="match status" value="1"/>
</dbReference>
<reference key="1">
    <citation type="journal article" date="2002" name="Lancet">
        <title>Genome and virulence determinants of high virulence community-acquired MRSA.</title>
        <authorList>
            <person name="Baba T."/>
            <person name="Takeuchi F."/>
            <person name="Kuroda M."/>
            <person name="Yuzawa H."/>
            <person name="Aoki K."/>
            <person name="Oguchi A."/>
            <person name="Nagai Y."/>
            <person name="Iwama N."/>
            <person name="Asano K."/>
            <person name="Naimi T."/>
            <person name="Kuroda H."/>
            <person name="Cui L."/>
            <person name="Yamamoto K."/>
            <person name="Hiramatsu K."/>
        </authorList>
    </citation>
    <scope>NUCLEOTIDE SEQUENCE [LARGE SCALE GENOMIC DNA]</scope>
    <source>
        <strain>MW2</strain>
    </source>
</reference>
<accession>Q7A088</accession>
<gene>
    <name evidence="1" type="primary">ecfA2</name>
    <name type="synonym">cbiO2</name>
    <name type="ordered locus">MW2140</name>
</gene>
<protein>
    <recommendedName>
        <fullName evidence="1">Energy-coupling factor transporter ATP-binding protein EcfA2</fullName>
        <shortName evidence="1">ECF transporter A component EcfA2</shortName>
        <ecNumber evidence="1">7.-.-.-</ecNumber>
    </recommendedName>
</protein>